<sequence>MRDELFTEELKKQFEFDERVAGVFDDMLSRSIPYYALALELSADFALANLPKEGGWVYDLGCSTGSLLLEIERRAGAKNPRLIGIDNSEAMLSRARAKALGYGSRVDFIQGDILDFEYQKSEVILCHYTLQFIRPIHRAYLVQKLYDSLKPEGILIFSEKVVSEDRVLDHQMIERYYAYKREQGYSEVEIVKKREALENVLIPYTAKENEKMLLEAGFAHVETLFRWVNFATFIAKKGEA</sequence>
<feature type="chain" id="PRO_0000314404" description="Carboxy-S-adenosyl-L-methionine synthase">
    <location>
        <begin position="1"/>
        <end position="240"/>
    </location>
</feature>
<feature type="binding site" evidence="1">
    <location>
        <position position="35"/>
    </location>
    <ligand>
        <name>S-adenosyl-L-methionine</name>
        <dbReference type="ChEBI" id="CHEBI:59789"/>
    </ligand>
</feature>
<feature type="binding site" evidence="1">
    <location>
        <begin position="61"/>
        <end position="63"/>
    </location>
    <ligand>
        <name>S-adenosyl-L-methionine</name>
        <dbReference type="ChEBI" id="CHEBI:59789"/>
    </ligand>
</feature>
<feature type="binding site" evidence="1">
    <location>
        <begin position="86"/>
        <end position="87"/>
    </location>
    <ligand>
        <name>S-adenosyl-L-methionine</name>
        <dbReference type="ChEBI" id="CHEBI:59789"/>
    </ligand>
</feature>
<feature type="binding site" evidence="1">
    <location>
        <begin position="112"/>
        <end position="113"/>
    </location>
    <ligand>
        <name>S-adenosyl-L-methionine</name>
        <dbReference type="ChEBI" id="CHEBI:59789"/>
    </ligand>
</feature>
<feature type="binding site" evidence="1">
    <location>
        <position position="194"/>
    </location>
    <ligand>
        <name>S-adenosyl-L-methionine</name>
        <dbReference type="ChEBI" id="CHEBI:59789"/>
    </ligand>
</feature>
<evidence type="ECO:0000255" key="1">
    <source>
        <dbReference type="HAMAP-Rule" id="MF_01589"/>
    </source>
</evidence>
<comment type="function">
    <text evidence="1">Catalyzes the conversion of S-adenosyl-L-methionine (SAM) to carboxy-S-adenosyl-L-methionine (Cx-SAM).</text>
</comment>
<comment type="catalytic activity">
    <reaction evidence="1">
        <text>prephenate + S-adenosyl-L-methionine = carboxy-S-adenosyl-L-methionine + 3-phenylpyruvate + H2O</text>
        <dbReference type="Rhea" id="RHEA:51692"/>
        <dbReference type="ChEBI" id="CHEBI:15377"/>
        <dbReference type="ChEBI" id="CHEBI:18005"/>
        <dbReference type="ChEBI" id="CHEBI:29934"/>
        <dbReference type="ChEBI" id="CHEBI:59789"/>
        <dbReference type="ChEBI" id="CHEBI:134278"/>
    </reaction>
</comment>
<comment type="subunit">
    <text evidence="1">Homodimer.</text>
</comment>
<comment type="similarity">
    <text evidence="1">Belongs to the class I-like SAM-binding methyltransferase superfamily. Cx-SAM synthase family.</text>
</comment>
<reference key="1">
    <citation type="journal article" date="2003" name="Proc. Natl. Acad. Sci. U.S.A.">
        <title>Complete genome sequence and analysis of Wolinella succinogenes.</title>
        <authorList>
            <person name="Baar C."/>
            <person name="Eppinger M."/>
            <person name="Raddatz G."/>
            <person name="Simon J."/>
            <person name="Lanz C."/>
            <person name="Klimmek O."/>
            <person name="Nandakumar R."/>
            <person name="Gross R."/>
            <person name="Rosinus A."/>
            <person name="Keller H."/>
            <person name="Jagtap P."/>
            <person name="Linke B."/>
            <person name="Meyer F."/>
            <person name="Lederer H."/>
            <person name="Schuster S.C."/>
        </authorList>
    </citation>
    <scope>NUCLEOTIDE SEQUENCE [LARGE SCALE GENOMIC DNA]</scope>
    <source>
        <strain>ATCC 29543 / DSM 1740 / CCUG 13145 / JCM 31913 / LMG 7466 / NCTC 11488 / FDC 602W</strain>
    </source>
</reference>
<keyword id="KW-1185">Reference proteome</keyword>
<keyword id="KW-0949">S-adenosyl-L-methionine</keyword>
<keyword id="KW-0808">Transferase</keyword>
<protein>
    <recommendedName>
        <fullName evidence="1">Carboxy-S-adenosyl-L-methionine synthase</fullName>
        <shortName evidence="1">Cx-SAM synthase</shortName>
        <ecNumber evidence="1">2.1.3.-</ecNumber>
    </recommendedName>
</protein>
<gene>
    <name evidence="1" type="primary">cmoA</name>
    <name type="ordered locus">WS0587</name>
</gene>
<organism>
    <name type="scientific">Wolinella succinogenes (strain ATCC 29543 / DSM 1740 / CCUG 13145 / JCM 31913 / LMG 7466 / NCTC 11488 / FDC 602W)</name>
    <name type="common">Vibrio succinogenes</name>
    <dbReference type="NCBI Taxonomy" id="273121"/>
    <lineage>
        <taxon>Bacteria</taxon>
        <taxon>Pseudomonadati</taxon>
        <taxon>Campylobacterota</taxon>
        <taxon>Epsilonproteobacteria</taxon>
        <taxon>Campylobacterales</taxon>
        <taxon>Helicobacteraceae</taxon>
        <taxon>Wolinella</taxon>
    </lineage>
</organism>
<dbReference type="EC" id="2.1.3.-" evidence="1"/>
<dbReference type="EMBL" id="BX571658">
    <property type="protein sequence ID" value="CAE09719.1"/>
    <property type="molecule type" value="Genomic_DNA"/>
</dbReference>
<dbReference type="RefSeq" id="WP_011138519.1">
    <property type="nucleotide sequence ID" value="NC_005090.1"/>
</dbReference>
<dbReference type="SMR" id="Q7MSC3"/>
<dbReference type="STRING" id="273121.WS0587"/>
<dbReference type="KEGG" id="wsu:WS0587"/>
<dbReference type="eggNOG" id="COG4106">
    <property type="taxonomic scope" value="Bacteria"/>
</dbReference>
<dbReference type="HOGENOM" id="CLU_078475_0_0_7"/>
<dbReference type="Proteomes" id="UP000000422">
    <property type="component" value="Chromosome"/>
</dbReference>
<dbReference type="GO" id="GO:0016743">
    <property type="term" value="F:carboxyl- or carbamoyltransferase activity"/>
    <property type="evidence" value="ECO:0007669"/>
    <property type="project" value="UniProtKB-UniRule"/>
</dbReference>
<dbReference type="GO" id="GO:1904047">
    <property type="term" value="F:S-adenosyl-L-methionine binding"/>
    <property type="evidence" value="ECO:0007669"/>
    <property type="project" value="UniProtKB-UniRule"/>
</dbReference>
<dbReference type="GO" id="GO:0002098">
    <property type="term" value="P:tRNA wobble uridine modification"/>
    <property type="evidence" value="ECO:0007669"/>
    <property type="project" value="InterPro"/>
</dbReference>
<dbReference type="CDD" id="cd02440">
    <property type="entry name" value="AdoMet_MTases"/>
    <property type="match status" value="1"/>
</dbReference>
<dbReference type="Gene3D" id="3.40.50.150">
    <property type="entry name" value="Vaccinia Virus protein VP39"/>
    <property type="match status" value="1"/>
</dbReference>
<dbReference type="HAMAP" id="MF_01589">
    <property type="entry name" value="Cx_SAM_synthase"/>
    <property type="match status" value="1"/>
</dbReference>
<dbReference type="InterPro" id="IPR005271">
    <property type="entry name" value="CmoA"/>
</dbReference>
<dbReference type="InterPro" id="IPR041698">
    <property type="entry name" value="Methyltransf_25"/>
</dbReference>
<dbReference type="InterPro" id="IPR029063">
    <property type="entry name" value="SAM-dependent_MTases_sf"/>
</dbReference>
<dbReference type="NCBIfam" id="TIGR00740">
    <property type="entry name" value="carboxy-S-adenosyl-L-methionine synthase CmoA"/>
    <property type="match status" value="1"/>
</dbReference>
<dbReference type="PANTHER" id="PTHR43861:SF2">
    <property type="entry name" value="CARBOXY-S-ADENOSYL-L-METHIONINE SYNTHASE"/>
    <property type="match status" value="1"/>
</dbReference>
<dbReference type="PANTHER" id="PTHR43861">
    <property type="entry name" value="TRANS-ACONITATE 2-METHYLTRANSFERASE-RELATED"/>
    <property type="match status" value="1"/>
</dbReference>
<dbReference type="Pfam" id="PF13649">
    <property type="entry name" value="Methyltransf_25"/>
    <property type="match status" value="1"/>
</dbReference>
<dbReference type="PIRSF" id="PIRSF006325">
    <property type="entry name" value="MeTrfase_bac"/>
    <property type="match status" value="1"/>
</dbReference>
<dbReference type="SUPFAM" id="SSF53335">
    <property type="entry name" value="S-adenosyl-L-methionine-dependent methyltransferases"/>
    <property type="match status" value="1"/>
</dbReference>
<proteinExistence type="inferred from homology"/>
<accession>Q7MSC3</accession>
<name>CMOA_WOLSU</name>